<feature type="signal peptide" evidence="2">
    <location>
        <begin position="1"/>
        <end position="29"/>
    </location>
</feature>
<feature type="chain" id="PRO_0000012577" description="General odorant-binding protein lush">
    <location>
        <begin position="30"/>
        <end position="153"/>
    </location>
</feature>
<feature type="binding site" evidence="6 15">
    <location>
        <position position="81"/>
    </location>
    <ligand>
        <name>1-propanol</name>
        <dbReference type="ChEBI" id="CHEBI:28831"/>
    </ligand>
</feature>
<feature type="binding site" evidence="6 16">
    <location>
        <position position="81"/>
    </location>
    <ligand>
        <name>butan-1-ol</name>
        <dbReference type="ChEBI" id="CHEBI:28885"/>
    </ligand>
</feature>
<feature type="binding site" evidence="6 14">
    <location>
        <position position="81"/>
    </location>
    <ligand>
        <name>ethanol</name>
        <dbReference type="ChEBI" id="CHEBI:16236"/>
    </ligand>
</feature>
<feature type="binding site" evidence="6 15">
    <location>
        <position position="86"/>
    </location>
    <ligand>
        <name>1-propanol</name>
        <dbReference type="ChEBI" id="CHEBI:28831"/>
    </ligand>
</feature>
<feature type="binding site" evidence="6 16">
    <location>
        <position position="86"/>
    </location>
    <ligand>
        <name>butan-1-ol</name>
        <dbReference type="ChEBI" id="CHEBI:28885"/>
    </ligand>
</feature>
<feature type="binding site" evidence="6 14">
    <location>
        <position position="86"/>
    </location>
    <ligand>
        <name>ethanol</name>
        <dbReference type="ChEBI" id="CHEBI:16236"/>
    </ligand>
</feature>
<feature type="disulfide bond" evidence="1">
    <location>
        <begin position="46"/>
        <end position="79"/>
    </location>
</feature>
<feature type="disulfide bond" evidence="1">
    <location>
        <begin position="75"/>
        <end position="132"/>
    </location>
</feature>
<feature type="disulfide bond" evidence="1">
    <location>
        <begin position="121"/>
        <end position="141"/>
    </location>
</feature>
<feature type="helix" evidence="18">
    <location>
        <begin position="32"/>
        <end position="44"/>
    </location>
</feature>
<feature type="helix" evidence="18">
    <location>
        <begin position="47"/>
        <end position="49"/>
    </location>
</feature>
<feature type="helix" evidence="18">
    <location>
        <begin position="54"/>
        <end position="61"/>
    </location>
</feature>
<feature type="helix" evidence="18">
    <location>
        <begin position="71"/>
        <end position="84"/>
    </location>
</feature>
<feature type="helix" evidence="18">
    <location>
        <begin position="95"/>
        <end position="101"/>
    </location>
</feature>
<feature type="helix" evidence="18">
    <location>
        <begin position="102"/>
        <end position="104"/>
    </location>
</feature>
<feature type="helix" evidence="18">
    <location>
        <begin position="108"/>
        <end position="110"/>
    </location>
</feature>
<feature type="helix" evidence="18">
    <location>
        <begin position="111"/>
        <end position="121"/>
    </location>
</feature>
<feature type="helix" evidence="18">
    <location>
        <begin position="124"/>
        <end position="127"/>
    </location>
</feature>
<feature type="helix" evidence="18">
    <location>
        <begin position="131"/>
        <end position="145"/>
    </location>
</feature>
<comment type="function">
    <text evidence="3 7 8 9 10 11">Odorant-binding protein required for olfactory behavior and for activity of pheromone-sensitive neurons. Binds to alcohols and mediates avoidance behavior to high concentrations of alcohols, the alcohol-binding possibly resulting in activation of receptors on T2B neurons, the activation of these receptors inhibiting these neurons. Acts in concert with Snmp and lush to capture cVA molecules on the surface of Or67d expressing olfactory dendrites and facilitate their transfer to the odorant-receptor Orco complex. Required for cVA response, probably by binding to VA. May act by serving as an adapter that bridges the presence of gaseous pheromone molecules, cVA, to activation of specific neuronal receptors expressed on T1 olfactory neurons, possibly via a specific conformational change induced by cVA that in turn activates T1 receptors. T1 neurons are excited by the pheromone VA, while T2 neurons are inhibited by alcohols. Also binds to phthalates.</text>
</comment>
<comment type="subcellular location">
    <subcellularLocation>
        <location evidence="11">Secreted</location>
    </subcellularLocation>
</comment>
<comment type="tissue specificity">
    <text evidence="4 5 8 10 11">Specifically expressed in chemosensory system in both males and females. Expressed in a subset of trichoid chemosensory sensilla located on the ventral-lateral surface of the third antennal segment. Secreted from non-neuronal support cells into the sensillum lymph that bathes the olfactory neurons within these sensilla.</text>
</comment>
<comment type="similarity">
    <text evidence="12">Belongs to the PBP/GOBP family.</text>
</comment>
<comment type="caution">
    <text evidence="13">According to some authors (PubMed:14759510) it does not bind to ethanol. They suggest that the avoidance triggered by high concentration of alcohols may be due to impurities, such as phthalates or structurally related compounds, present as contaminants in the ethanol used. They conclude that it may be directly and strictly required for the perception of an odorant, rather than being involved only in modulating the response to ethanol.</text>
</comment>
<gene>
    <name type="primary">lush</name>
    <name type="synonym">Obp76a</name>
    <name type="synonym">Obp76c</name>
    <name type="ORF">CG8807</name>
</gene>
<accession>O02372</accession>
<accession>E1JI39</accession>
<accession>Q29QG4</accession>
<dbReference type="EMBL" id="AF001621">
    <property type="protein sequence ID" value="AAB58940.1"/>
    <property type="molecule type" value="mRNA"/>
</dbReference>
<dbReference type="EMBL" id="AE014296">
    <property type="protein sequence ID" value="AAF49136.1"/>
    <property type="molecule type" value="Genomic_DNA"/>
</dbReference>
<dbReference type="EMBL" id="AE014296">
    <property type="protein sequence ID" value="ACZ94739.1"/>
    <property type="molecule type" value="Genomic_DNA"/>
</dbReference>
<dbReference type="EMBL" id="BT024426">
    <property type="protein sequence ID" value="ABC86488.1"/>
    <property type="molecule type" value="mRNA"/>
</dbReference>
<dbReference type="RefSeq" id="NP_001163468.1">
    <property type="nucleotide sequence ID" value="NM_001169997.1"/>
</dbReference>
<dbReference type="RefSeq" id="NP_524162.1">
    <property type="nucleotide sequence ID" value="NM_079438.3"/>
</dbReference>
<dbReference type="PDB" id="1OOF">
    <property type="method" value="X-ray"/>
    <property type="resolution" value="1.49 A"/>
    <property type="chains" value="A/B=30-153"/>
</dbReference>
<dbReference type="PDB" id="1OOG">
    <property type="method" value="X-ray"/>
    <property type="resolution" value="1.45 A"/>
    <property type="chains" value="A/B=30-153"/>
</dbReference>
<dbReference type="PDB" id="1OOH">
    <property type="method" value="X-ray"/>
    <property type="resolution" value="1.25 A"/>
    <property type="chains" value="A/B=30-153"/>
</dbReference>
<dbReference type="PDB" id="1OOI">
    <property type="method" value="X-ray"/>
    <property type="resolution" value="2.04 A"/>
    <property type="chains" value="X=30-153"/>
</dbReference>
<dbReference type="PDB" id="1T14">
    <property type="method" value="X-ray"/>
    <property type="resolution" value="1.86 A"/>
    <property type="chains" value="A/B=30-153"/>
</dbReference>
<dbReference type="PDB" id="2GTE">
    <property type="method" value="X-ray"/>
    <property type="resolution" value="1.40 A"/>
    <property type="chains" value="A/B=30-153"/>
</dbReference>
<dbReference type="PDB" id="2QDI">
    <property type="method" value="X-ray"/>
    <property type="resolution" value="2.00 A"/>
    <property type="chains" value="A/B=30-153"/>
</dbReference>
<dbReference type="PDB" id="3B6X">
    <property type="method" value="X-ray"/>
    <property type="resolution" value="2.00 A"/>
    <property type="chains" value="A/B=30-153"/>
</dbReference>
<dbReference type="PDB" id="3B7A">
    <property type="method" value="X-ray"/>
    <property type="resolution" value="1.90 A"/>
    <property type="chains" value="A/B=30-153"/>
</dbReference>
<dbReference type="PDB" id="3B86">
    <property type="method" value="X-ray"/>
    <property type="resolution" value="2.00 A"/>
    <property type="chains" value="A/B=30-153"/>
</dbReference>
<dbReference type="PDB" id="3B87">
    <property type="method" value="X-ray"/>
    <property type="resolution" value="2.00 A"/>
    <property type="chains" value="A/B=30-153"/>
</dbReference>
<dbReference type="PDB" id="3B88">
    <property type="method" value="X-ray"/>
    <property type="resolution" value="2.00 A"/>
    <property type="chains" value="A/B=30-153"/>
</dbReference>
<dbReference type="PDBsum" id="1OOF"/>
<dbReference type="PDBsum" id="1OOG"/>
<dbReference type="PDBsum" id="1OOH"/>
<dbReference type="PDBsum" id="1OOI"/>
<dbReference type="PDBsum" id="1T14"/>
<dbReference type="PDBsum" id="2GTE"/>
<dbReference type="PDBsum" id="2QDI"/>
<dbReference type="PDBsum" id="3B6X"/>
<dbReference type="PDBsum" id="3B7A"/>
<dbReference type="PDBsum" id="3B86"/>
<dbReference type="PDBsum" id="3B87"/>
<dbReference type="PDBsum" id="3B88"/>
<dbReference type="SMR" id="O02372"/>
<dbReference type="BioGRID" id="65406">
    <property type="interactions" value="4"/>
</dbReference>
<dbReference type="FunCoup" id="O02372">
    <property type="interactions" value="1"/>
</dbReference>
<dbReference type="IntAct" id="O02372">
    <property type="interactions" value="1"/>
</dbReference>
<dbReference type="STRING" id="7227.FBpp0074737"/>
<dbReference type="PaxDb" id="7227-FBpp0074737"/>
<dbReference type="DNASU" id="40136"/>
<dbReference type="EnsemblMetazoa" id="FBtr0074969">
    <property type="protein sequence ID" value="FBpp0074737"/>
    <property type="gene ID" value="FBgn0020277"/>
</dbReference>
<dbReference type="EnsemblMetazoa" id="FBtr0301489">
    <property type="protein sequence ID" value="FBpp0290704"/>
    <property type="gene ID" value="FBgn0020277"/>
</dbReference>
<dbReference type="GeneID" id="40136"/>
<dbReference type="KEGG" id="dme:Dmel_CG8807"/>
<dbReference type="UCSC" id="CG8807-RA">
    <property type="organism name" value="d. melanogaster"/>
</dbReference>
<dbReference type="AGR" id="FB:FBgn0020277"/>
<dbReference type="CTD" id="40136"/>
<dbReference type="FlyBase" id="FBgn0020277">
    <property type="gene designation" value="lush"/>
</dbReference>
<dbReference type="VEuPathDB" id="VectorBase:FBgn0020277"/>
<dbReference type="eggNOG" id="ENOG502SA47">
    <property type="taxonomic scope" value="Eukaryota"/>
</dbReference>
<dbReference type="GeneTree" id="ENSGT00940000176403"/>
<dbReference type="HOGENOM" id="CLU_107288_0_0_1"/>
<dbReference type="InParanoid" id="O02372"/>
<dbReference type="OMA" id="CYTRCIA"/>
<dbReference type="OrthoDB" id="6610259at2759"/>
<dbReference type="PhylomeDB" id="O02372"/>
<dbReference type="BioGRID-ORCS" id="40136">
    <property type="hits" value="0 hits in 1 CRISPR screen"/>
</dbReference>
<dbReference type="EvolutionaryTrace" id="O02372"/>
<dbReference type="GenomeRNAi" id="40136"/>
<dbReference type="PRO" id="PR:O02372"/>
<dbReference type="Proteomes" id="UP000000803">
    <property type="component" value="Chromosome 3L"/>
</dbReference>
<dbReference type="Bgee" id="FBgn0020277">
    <property type="expression patterns" value="Expressed in epithelial cell in antenna and 35 other cell types or tissues"/>
</dbReference>
<dbReference type="ExpressionAtlas" id="O02372">
    <property type="expression patterns" value="baseline and differential"/>
</dbReference>
<dbReference type="GO" id="GO:0005576">
    <property type="term" value="C:extracellular region"/>
    <property type="evidence" value="ECO:0000314"/>
    <property type="project" value="UniProtKB"/>
</dbReference>
<dbReference type="GO" id="GO:0035275">
    <property type="term" value="F:dibutyl phthalate binding"/>
    <property type="evidence" value="ECO:0000314"/>
    <property type="project" value="FlyBase"/>
</dbReference>
<dbReference type="GO" id="GO:0035274">
    <property type="term" value="F:diphenyl phthalate binding"/>
    <property type="evidence" value="ECO:0000314"/>
    <property type="project" value="FlyBase"/>
</dbReference>
<dbReference type="GO" id="GO:0005549">
    <property type="term" value="F:odorant binding"/>
    <property type="evidence" value="ECO:0000304"/>
    <property type="project" value="FlyBase"/>
</dbReference>
<dbReference type="GO" id="GO:0005550">
    <property type="term" value="F:pheromone binding"/>
    <property type="evidence" value="ECO:0007669"/>
    <property type="project" value="UniProtKB-KW"/>
</dbReference>
<dbReference type="GO" id="GO:0007619">
    <property type="term" value="P:courtship behavior"/>
    <property type="evidence" value="ECO:0000315"/>
    <property type="project" value="FlyBase"/>
</dbReference>
<dbReference type="GO" id="GO:0042048">
    <property type="term" value="P:olfactory behavior"/>
    <property type="evidence" value="ECO:0000314"/>
    <property type="project" value="UniProtKB"/>
</dbReference>
<dbReference type="GO" id="GO:0045471">
    <property type="term" value="P:response to ethanol"/>
    <property type="evidence" value="ECO:0000304"/>
    <property type="project" value="FlyBase"/>
</dbReference>
<dbReference type="GO" id="GO:0019236">
    <property type="term" value="P:response to pheromone"/>
    <property type="evidence" value="ECO:0000314"/>
    <property type="project" value="FlyBase"/>
</dbReference>
<dbReference type="GO" id="GO:0007608">
    <property type="term" value="P:sensory perception of smell"/>
    <property type="evidence" value="ECO:0000315"/>
    <property type="project" value="FlyBase"/>
</dbReference>
<dbReference type="CDD" id="cd23992">
    <property type="entry name" value="PBP_GOBP"/>
    <property type="match status" value="1"/>
</dbReference>
<dbReference type="FunFam" id="1.10.238.20:FF:000001">
    <property type="entry name" value="General odorant-binding protein lush"/>
    <property type="match status" value="1"/>
</dbReference>
<dbReference type="Gene3D" id="1.10.238.20">
    <property type="entry name" value="Pheromone/general odorant binding protein domain"/>
    <property type="match status" value="1"/>
</dbReference>
<dbReference type="InterPro" id="IPR006170">
    <property type="entry name" value="PBP/GOBP"/>
</dbReference>
<dbReference type="InterPro" id="IPR036728">
    <property type="entry name" value="PBP_GOBP_sf"/>
</dbReference>
<dbReference type="PANTHER" id="PTHR21364">
    <property type="entry name" value="GENERAL ODORANT-BINDING PROTEIN 19A"/>
    <property type="match status" value="1"/>
</dbReference>
<dbReference type="PANTHER" id="PTHR21364:SF1">
    <property type="entry name" value="GENERAL ODORANT-BINDING PROTEIN LUSH"/>
    <property type="match status" value="1"/>
</dbReference>
<dbReference type="Pfam" id="PF01395">
    <property type="entry name" value="PBP_GOBP"/>
    <property type="match status" value="1"/>
</dbReference>
<dbReference type="SMART" id="SM00708">
    <property type="entry name" value="PhBP"/>
    <property type="match status" value="1"/>
</dbReference>
<dbReference type="SUPFAM" id="SSF47565">
    <property type="entry name" value="Insect pheromone/odorant-binding proteins"/>
    <property type="match status" value="1"/>
</dbReference>
<reference key="1">
    <citation type="journal article" date="1998" name="Genetics">
        <title>LUSH odorant-binding protein mediates chemosensory responses to alcohols in Drosophila melanogaster.</title>
        <authorList>
            <person name="Kim M.-S."/>
            <person name="Repp A."/>
            <person name="Smith D.P."/>
        </authorList>
    </citation>
    <scope>NUCLEOTIDE SEQUENCE [MRNA]</scope>
    <scope>FUNCTION</scope>
    <scope>SUBCELLULAR LOCATION</scope>
    <scope>TISSUE SPECIFICITY</scope>
    <source>
        <strain>Oregon-R</strain>
    </source>
</reference>
<reference key="2">
    <citation type="journal article" date="2000" name="Science">
        <title>The genome sequence of Drosophila melanogaster.</title>
        <authorList>
            <person name="Adams M.D."/>
            <person name="Celniker S.E."/>
            <person name="Holt R.A."/>
            <person name="Evans C.A."/>
            <person name="Gocayne J.D."/>
            <person name="Amanatides P.G."/>
            <person name="Scherer S.E."/>
            <person name="Li P.W."/>
            <person name="Hoskins R.A."/>
            <person name="Galle R.F."/>
            <person name="George R.A."/>
            <person name="Lewis S.E."/>
            <person name="Richards S."/>
            <person name="Ashburner M."/>
            <person name="Henderson S.N."/>
            <person name="Sutton G.G."/>
            <person name="Wortman J.R."/>
            <person name="Yandell M.D."/>
            <person name="Zhang Q."/>
            <person name="Chen L.X."/>
            <person name="Brandon R.C."/>
            <person name="Rogers Y.-H.C."/>
            <person name="Blazej R.G."/>
            <person name="Champe M."/>
            <person name="Pfeiffer B.D."/>
            <person name="Wan K.H."/>
            <person name="Doyle C."/>
            <person name="Baxter E.G."/>
            <person name="Helt G."/>
            <person name="Nelson C.R."/>
            <person name="Miklos G.L.G."/>
            <person name="Abril J.F."/>
            <person name="Agbayani A."/>
            <person name="An H.-J."/>
            <person name="Andrews-Pfannkoch C."/>
            <person name="Baldwin D."/>
            <person name="Ballew R.M."/>
            <person name="Basu A."/>
            <person name="Baxendale J."/>
            <person name="Bayraktaroglu L."/>
            <person name="Beasley E.M."/>
            <person name="Beeson K.Y."/>
            <person name="Benos P.V."/>
            <person name="Berman B.P."/>
            <person name="Bhandari D."/>
            <person name="Bolshakov S."/>
            <person name="Borkova D."/>
            <person name="Botchan M.R."/>
            <person name="Bouck J."/>
            <person name="Brokstein P."/>
            <person name="Brottier P."/>
            <person name="Burtis K.C."/>
            <person name="Busam D.A."/>
            <person name="Butler H."/>
            <person name="Cadieu E."/>
            <person name="Center A."/>
            <person name="Chandra I."/>
            <person name="Cherry J.M."/>
            <person name="Cawley S."/>
            <person name="Dahlke C."/>
            <person name="Davenport L.B."/>
            <person name="Davies P."/>
            <person name="de Pablos B."/>
            <person name="Delcher A."/>
            <person name="Deng Z."/>
            <person name="Mays A.D."/>
            <person name="Dew I."/>
            <person name="Dietz S.M."/>
            <person name="Dodson K."/>
            <person name="Doup L.E."/>
            <person name="Downes M."/>
            <person name="Dugan-Rocha S."/>
            <person name="Dunkov B.C."/>
            <person name="Dunn P."/>
            <person name="Durbin K.J."/>
            <person name="Evangelista C.C."/>
            <person name="Ferraz C."/>
            <person name="Ferriera S."/>
            <person name="Fleischmann W."/>
            <person name="Fosler C."/>
            <person name="Gabrielian A.E."/>
            <person name="Garg N.S."/>
            <person name="Gelbart W.M."/>
            <person name="Glasser K."/>
            <person name="Glodek A."/>
            <person name="Gong F."/>
            <person name="Gorrell J.H."/>
            <person name="Gu Z."/>
            <person name="Guan P."/>
            <person name="Harris M."/>
            <person name="Harris N.L."/>
            <person name="Harvey D.A."/>
            <person name="Heiman T.J."/>
            <person name="Hernandez J.R."/>
            <person name="Houck J."/>
            <person name="Hostin D."/>
            <person name="Houston K.A."/>
            <person name="Howland T.J."/>
            <person name="Wei M.-H."/>
            <person name="Ibegwam C."/>
            <person name="Jalali M."/>
            <person name="Kalush F."/>
            <person name="Karpen G.H."/>
            <person name="Ke Z."/>
            <person name="Kennison J.A."/>
            <person name="Ketchum K.A."/>
            <person name="Kimmel B.E."/>
            <person name="Kodira C.D."/>
            <person name="Kraft C.L."/>
            <person name="Kravitz S."/>
            <person name="Kulp D."/>
            <person name="Lai Z."/>
            <person name="Lasko P."/>
            <person name="Lei Y."/>
            <person name="Levitsky A.A."/>
            <person name="Li J.H."/>
            <person name="Li Z."/>
            <person name="Liang Y."/>
            <person name="Lin X."/>
            <person name="Liu X."/>
            <person name="Mattei B."/>
            <person name="McIntosh T.C."/>
            <person name="McLeod M.P."/>
            <person name="McPherson D."/>
            <person name="Merkulov G."/>
            <person name="Milshina N.V."/>
            <person name="Mobarry C."/>
            <person name="Morris J."/>
            <person name="Moshrefi A."/>
            <person name="Mount S.M."/>
            <person name="Moy M."/>
            <person name="Murphy B."/>
            <person name="Murphy L."/>
            <person name="Muzny D.M."/>
            <person name="Nelson D.L."/>
            <person name="Nelson D.R."/>
            <person name="Nelson K.A."/>
            <person name="Nixon K."/>
            <person name="Nusskern D.R."/>
            <person name="Pacleb J.M."/>
            <person name="Palazzolo M."/>
            <person name="Pittman G.S."/>
            <person name="Pan S."/>
            <person name="Pollard J."/>
            <person name="Puri V."/>
            <person name="Reese M.G."/>
            <person name="Reinert K."/>
            <person name="Remington K."/>
            <person name="Saunders R.D.C."/>
            <person name="Scheeler F."/>
            <person name="Shen H."/>
            <person name="Shue B.C."/>
            <person name="Siden-Kiamos I."/>
            <person name="Simpson M."/>
            <person name="Skupski M.P."/>
            <person name="Smith T.J."/>
            <person name="Spier E."/>
            <person name="Spradling A.C."/>
            <person name="Stapleton M."/>
            <person name="Strong R."/>
            <person name="Sun E."/>
            <person name="Svirskas R."/>
            <person name="Tector C."/>
            <person name="Turner R."/>
            <person name="Venter E."/>
            <person name="Wang A.H."/>
            <person name="Wang X."/>
            <person name="Wang Z.-Y."/>
            <person name="Wassarman D.A."/>
            <person name="Weinstock G.M."/>
            <person name="Weissenbach J."/>
            <person name="Williams S.M."/>
            <person name="Woodage T."/>
            <person name="Worley K.C."/>
            <person name="Wu D."/>
            <person name="Yang S."/>
            <person name="Yao Q.A."/>
            <person name="Ye J."/>
            <person name="Yeh R.-F."/>
            <person name="Zaveri J.S."/>
            <person name="Zhan M."/>
            <person name="Zhang G."/>
            <person name="Zhao Q."/>
            <person name="Zheng L."/>
            <person name="Zheng X.H."/>
            <person name="Zhong F.N."/>
            <person name="Zhong W."/>
            <person name="Zhou X."/>
            <person name="Zhu S.C."/>
            <person name="Zhu X."/>
            <person name="Smith H.O."/>
            <person name="Gibbs R.A."/>
            <person name="Myers E.W."/>
            <person name="Rubin G.M."/>
            <person name="Venter J.C."/>
        </authorList>
    </citation>
    <scope>NUCLEOTIDE SEQUENCE [LARGE SCALE GENOMIC DNA]</scope>
    <source>
        <strain>Berkeley</strain>
    </source>
</reference>
<reference key="3">
    <citation type="journal article" date="2002" name="Genome Biol.">
        <title>Annotation of the Drosophila melanogaster euchromatic genome: a systematic review.</title>
        <authorList>
            <person name="Misra S."/>
            <person name="Crosby M.A."/>
            <person name="Mungall C.J."/>
            <person name="Matthews B.B."/>
            <person name="Campbell K.S."/>
            <person name="Hradecky P."/>
            <person name="Huang Y."/>
            <person name="Kaminker J.S."/>
            <person name="Millburn G.H."/>
            <person name="Prochnik S.E."/>
            <person name="Smith C.D."/>
            <person name="Tupy J.L."/>
            <person name="Whitfield E.J."/>
            <person name="Bayraktaroglu L."/>
            <person name="Berman B.P."/>
            <person name="Bettencourt B.R."/>
            <person name="Celniker S.E."/>
            <person name="de Grey A.D.N.J."/>
            <person name="Drysdale R.A."/>
            <person name="Harris N.L."/>
            <person name="Richter J."/>
            <person name="Russo S."/>
            <person name="Schroeder A.J."/>
            <person name="Shu S.Q."/>
            <person name="Stapleton M."/>
            <person name="Yamada C."/>
            <person name="Ashburner M."/>
            <person name="Gelbart W.M."/>
            <person name="Rubin G.M."/>
            <person name="Lewis S.E."/>
        </authorList>
    </citation>
    <scope>GENOME REANNOTATION</scope>
    <source>
        <strain>Berkeley</strain>
    </source>
</reference>
<reference key="4">
    <citation type="submission" date="2006-01" db="EMBL/GenBank/DDBJ databases">
        <authorList>
            <person name="Stapleton M."/>
            <person name="Carlson J.W."/>
            <person name="Chavez C."/>
            <person name="Frise E."/>
            <person name="George R.A."/>
            <person name="Pacleb J.M."/>
            <person name="Park S."/>
            <person name="Wan K.H."/>
            <person name="Yu C."/>
            <person name="Celniker S.E."/>
        </authorList>
    </citation>
    <scope>NUCLEOTIDE SEQUENCE [LARGE SCALE MRNA]</scope>
    <source>
        <strain>Berkeley</strain>
    </source>
</reference>
<reference key="5">
    <citation type="journal article" date="2001" name="Chem. Senses">
        <title>The invertebrate odorant-binding protein LUSH is required for normal olfactory behavior in Drosophila.</title>
        <authorList>
            <person name="Kim M.-S."/>
            <person name="Smith D.P."/>
        </authorList>
    </citation>
    <scope>FUNCTION</scope>
</reference>
<reference key="6">
    <citation type="journal article" date="2001" name="Genetics">
        <title>A large family of divergent Drosophila odorant-binding proteins expressed in gustatory and olfactory sensilla.</title>
        <authorList>
            <person name="Galindo K."/>
            <person name="Smith D.P."/>
        </authorList>
    </citation>
    <scope>IDENTIFICATION</scope>
    <scope>TISSUE SPECIFICITY</scope>
</reference>
<reference key="7">
    <citation type="journal article" date="2001" name="Microsc. Res. Tech.">
        <title>Expression mosaic of odorant-binding proteins in Drosophila olfactory organs.</title>
        <authorList>
            <person name="Shanbhag S.R."/>
            <person name="Hekmat-Scafe D."/>
            <person name="Kim M.-S."/>
            <person name="Park S.-K."/>
            <person name="Carlson J.R."/>
            <person name="Pikielny C."/>
            <person name="Smith D.P."/>
            <person name="Steinbrecht R.A."/>
        </authorList>
    </citation>
    <scope>TISSUE SPECIFICITY</scope>
</reference>
<reference key="8">
    <citation type="journal article" date="2004" name="FEBS Lett.">
        <title>Revisiting the odorant-binding protein LUSH of Drosophila melanogaster: evidence for odour recognition and discrimination.</title>
        <authorList>
            <person name="Zhou J.-J."/>
            <person name="Zhang G.-A."/>
            <person name="Huang W."/>
            <person name="Birkett M.A."/>
            <person name="Field L.M."/>
            <person name="Pickett J.A."/>
            <person name="Pelosi P."/>
        </authorList>
    </citation>
    <scope>FUNCTION</scope>
</reference>
<reference key="9">
    <citation type="journal article" date="2005" name="Neuron">
        <title>Drosophila OBP LUSH is required for activity of pheromone-sensitive neurons.</title>
        <authorList>
            <person name="Xu P."/>
            <person name="Atkinson R."/>
            <person name="Jones D.N.M."/>
            <person name="Smith D.P."/>
        </authorList>
    </citation>
    <scope>FUNCTION</scope>
    <scope>TISSUE SPECIFICITY</scope>
</reference>
<reference key="10">
    <citation type="journal article" date="2006" name="J. Neurosci.">
        <title>A pheromone receptor mediates 11-cis-vaccenyl acetate-induced responses in Drosophila.</title>
        <authorList>
            <person name="Ha T.S."/>
            <person name="Smith D.P."/>
        </authorList>
    </citation>
    <scope>FUNCTION</scope>
</reference>
<reference key="11">
    <citation type="journal article" date="2007" name="Nature">
        <title>An essential role for a CD36-related receptor in pheromone detection in Drosophila.</title>
        <authorList>
            <person name="Benton R."/>
            <person name="Vannice K.S."/>
            <person name="Vosshall L.B."/>
        </authorList>
    </citation>
    <scope>FUNCTION</scope>
    <scope>TISSUE SPECIFICITY</scope>
</reference>
<reference evidence="14 15 16 17" key="12">
    <citation type="journal article" date="2003" name="Nat. Struct. Biol.">
        <title>Structure of a specific alcohol-binding site defined by the odorant binding protein LUSH from Drosophila melanogaster.</title>
        <authorList>
            <person name="Kruse S.W."/>
            <person name="Zhao R."/>
            <person name="Smith D.P."/>
            <person name="Jones D.N.M."/>
        </authorList>
    </citation>
    <scope>X-RAY CRYSTALLOGRAPHY (1.25 ANGSTROMS) OF 30-153 OF APOPROTEIN AND COMPLEXES WITH ETHANOL; BUTAN-1-OL AND PROPAN-1-OL</scope>
</reference>
<keyword id="KW-0002">3D-structure</keyword>
<keyword id="KW-0085">Behavior</keyword>
<keyword id="KW-1015">Disulfide bond</keyword>
<keyword id="KW-0552">Olfaction</keyword>
<keyword id="KW-0589">Pheromone response</keyword>
<keyword id="KW-0590">Pheromone-binding</keyword>
<keyword id="KW-1185">Reference proteome</keyword>
<keyword id="KW-0964">Secreted</keyword>
<keyword id="KW-0716">Sensory transduction</keyword>
<keyword id="KW-0732">Signal</keyword>
<keyword id="KW-0813">Transport</keyword>
<name>OB76A_DROME</name>
<organism>
    <name type="scientific">Drosophila melanogaster</name>
    <name type="common">Fruit fly</name>
    <dbReference type="NCBI Taxonomy" id="7227"/>
    <lineage>
        <taxon>Eukaryota</taxon>
        <taxon>Metazoa</taxon>
        <taxon>Ecdysozoa</taxon>
        <taxon>Arthropoda</taxon>
        <taxon>Hexapoda</taxon>
        <taxon>Insecta</taxon>
        <taxon>Pterygota</taxon>
        <taxon>Neoptera</taxon>
        <taxon>Endopterygota</taxon>
        <taxon>Diptera</taxon>
        <taxon>Brachycera</taxon>
        <taxon>Muscomorpha</taxon>
        <taxon>Ephydroidea</taxon>
        <taxon>Drosophilidae</taxon>
        <taxon>Drosophila</taxon>
        <taxon>Sophophora</taxon>
    </lineage>
</organism>
<evidence type="ECO:0000250" key="1"/>
<evidence type="ECO:0000255" key="2"/>
<evidence type="ECO:0000269" key="3">
    <source>
    </source>
</evidence>
<evidence type="ECO:0000269" key="4">
    <source>
    </source>
</evidence>
<evidence type="ECO:0000269" key="5">
    <source>
    </source>
</evidence>
<evidence type="ECO:0000269" key="6">
    <source>
    </source>
</evidence>
<evidence type="ECO:0000269" key="7">
    <source>
    </source>
</evidence>
<evidence type="ECO:0000269" key="8">
    <source>
    </source>
</evidence>
<evidence type="ECO:0000269" key="9">
    <source>
    </source>
</evidence>
<evidence type="ECO:0000269" key="10">
    <source>
    </source>
</evidence>
<evidence type="ECO:0000269" key="11">
    <source>
    </source>
</evidence>
<evidence type="ECO:0000305" key="12"/>
<evidence type="ECO:0000305" key="13">
    <source>
    </source>
</evidence>
<evidence type="ECO:0007744" key="14">
    <source>
        <dbReference type="PDB" id="1OOF"/>
    </source>
</evidence>
<evidence type="ECO:0007744" key="15">
    <source>
        <dbReference type="PDB" id="1OOG"/>
    </source>
</evidence>
<evidence type="ECO:0007744" key="16">
    <source>
        <dbReference type="PDB" id="1OOH"/>
    </source>
</evidence>
<evidence type="ECO:0007744" key="17">
    <source>
        <dbReference type="PDB" id="1OOI"/>
    </source>
</evidence>
<evidence type="ECO:0007829" key="18">
    <source>
        <dbReference type="PDB" id="1OOH"/>
    </source>
</evidence>
<sequence>MKHWKRRSSAVFAIVLQVLVLLLPDPAVAMTMEQFLTSLDMIRSGCAPKFKLKTEDLDRLRVGDFNFPPSQDLMCYTKCVSLMAGTVNKKGEFNAPKALAQLPHLVPPEMMEMSRKSVEACRDTHKQFKESCERVYQTAKCFSENADGQFMWP</sequence>
<proteinExistence type="evidence at protein level"/>
<protein>
    <recommendedName>
        <fullName>General odorant-binding protein lush</fullName>
    </recommendedName>
</protein>